<sequence length="236" mass="25958">MTVNALLLSSSRVGDTPYLSHAIPFIKPLTTNAQKWIFIPYAGVSMSYDTYLASVVAGLSELRLDISGIHQHPDPRQAIKDADGILIGGGNTFHLLHELYKYDLVHLIREEVMNGKPYIGWSAGSNVSGLSIRTTNDMPIIEPPSFTALNIVPFQLNPHYSNYRAPGHNGETRAQRLLEFTRVDPITPVVGIVEGSALWRQGETLSLLGDNPAYLFCGEQQEIPIPVGSDLSHLLK</sequence>
<evidence type="ECO:0000255" key="1">
    <source>
        <dbReference type="HAMAP-Rule" id="MF_00510"/>
    </source>
</evidence>
<feature type="chain" id="PRO_1000050619" description="Peptidase E">
    <location>
        <begin position="1"/>
        <end position="236"/>
    </location>
</feature>
<feature type="active site" description="Charge relay system" evidence="1">
    <location>
        <position position="122"/>
    </location>
</feature>
<feature type="active site" description="Charge relay system" evidence="1">
    <location>
        <position position="137"/>
    </location>
</feature>
<feature type="active site" description="Charge relay system" evidence="1">
    <location>
        <position position="159"/>
    </location>
</feature>
<protein>
    <recommendedName>
        <fullName evidence="1">Peptidase E</fullName>
        <ecNumber evidence="1">3.4.13.21</ecNumber>
    </recommendedName>
    <alternativeName>
        <fullName evidence="1">Alpha-aspartyl dipeptidase</fullName>
    </alternativeName>
    <alternativeName>
        <fullName evidence="1">Asp-specific dipeptidase</fullName>
    </alternativeName>
    <alternativeName>
        <fullName evidence="1">Dipeptidase E</fullName>
    </alternativeName>
</protein>
<comment type="function">
    <text evidence="1">Hydrolyzes dipeptides containing N-terminal aspartate residues. May play a role in allowing the cell to use peptide aspartate to spare carbon otherwise required for the synthesis of the aspartate family of amino acids.</text>
</comment>
<comment type="catalytic activity">
    <reaction evidence="1">
        <text>Dipeptidase E catalyzes the hydrolysis of dipeptides Asp-|-Xaa. It does not act on peptides with N-terminal Glu, Asn or Gln, nor does it cleave isoaspartyl peptides.</text>
        <dbReference type="EC" id="3.4.13.21"/>
    </reaction>
</comment>
<comment type="subcellular location">
    <subcellularLocation>
        <location evidence="1">Cytoplasm</location>
    </subcellularLocation>
</comment>
<comment type="similarity">
    <text evidence="1">Belongs to the peptidase S51 family.</text>
</comment>
<proteinExistence type="inferred from homology"/>
<name>PEPE_SHESM</name>
<dbReference type="EC" id="3.4.13.21" evidence="1"/>
<dbReference type="EMBL" id="CP000446">
    <property type="protein sequence ID" value="ABI39423.1"/>
    <property type="molecule type" value="Genomic_DNA"/>
</dbReference>
<dbReference type="RefSeq" id="WP_011623113.1">
    <property type="nucleotide sequence ID" value="NC_008321.1"/>
</dbReference>
<dbReference type="SMR" id="Q0HHP4"/>
<dbReference type="MEROPS" id="S51.001"/>
<dbReference type="KEGG" id="she:Shewmr4_2352"/>
<dbReference type="HOGENOM" id="CLU_071689_0_0_6"/>
<dbReference type="GO" id="GO:0005737">
    <property type="term" value="C:cytoplasm"/>
    <property type="evidence" value="ECO:0007669"/>
    <property type="project" value="UniProtKB-SubCell"/>
</dbReference>
<dbReference type="GO" id="GO:0016805">
    <property type="term" value="F:dipeptidase activity"/>
    <property type="evidence" value="ECO:0007669"/>
    <property type="project" value="UniProtKB-UniRule"/>
</dbReference>
<dbReference type="GO" id="GO:0008236">
    <property type="term" value="F:serine-type peptidase activity"/>
    <property type="evidence" value="ECO:0007669"/>
    <property type="project" value="UniProtKB-KW"/>
</dbReference>
<dbReference type="GO" id="GO:0006508">
    <property type="term" value="P:proteolysis"/>
    <property type="evidence" value="ECO:0007669"/>
    <property type="project" value="UniProtKB-UniRule"/>
</dbReference>
<dbReference type="CDD" id="cd03146">
    <property type="entry name" value="GAT1_Peptidase_E"/>
    <property type="match status" value="1"/>
</dbReference>
<dbReference type="FunFam" id="3.40.50.880:FF:000007">
    <property type="entry name" value="Peptidase E"/>
    <property type="match status" value="1"/>
</dbReference>
<dbReference type="Gene3D" id="3.40.50.880">
    <property type="match status" value="1"/>
</dbReference>
<dbReference type="HAMAP" id="MF_00510">
    <property type="entry name" value="Peptidase_E"/>
    <property type="match status" value="1"/>
</dbReference>
<dbReference type="InterPro" id="IPR029062">
    <property type="entry name" value="Class_I_gatase-like"/>
</dbReference>
<dbReference type="InterPro" id="IPR005320">
    <property type="entry name" value="Peptidase_S51"/>
</dbReference>
<dbReference type="InterPro" id="IPR023172">
    <property type="entry name" value="Peptidase_S51_dipeptidase-E"/>
</dbReference>
<dbReference type="NCBIfam" id="NF003642">
    <property type="entry name" value="PRK05282.1"/>
    <property type="match status" value="1"/>
</dbReference>
<dbReference type="PANTHER" id="PTHR20842:SF0">
    <property type="entry name" value="ALPHA-ASPARTYL DIPEPTIDASE"/>
    <property type="match status" value="1"/>
</dbReference>
<dbReference type="PANTHER" id="PTHR20842">
    <property type="entry name" value="PROTEASE S51 ALPHA-ASPARTYL DIPEPTIDASE"/>
    <property type="match status" value="1"/>
</dbReference>
<dbReference type="Pfam" id="PF03575">
    <property type="entry name" value="Peptidase_S51"/>
    <property type="match status" value="1"/>
</dbReference>
<dbReference type="SUPFAM" id="SSF52317">
    <property type="entry name" value="Class I glutamine amidotransferase-like"/>
    <property type="match status" value="1"/>
</dbReference>
<keyword id="KW-0963">Cytoplasm</keyword>
<keyword id="KW-0224">Dipeptidase</keyword>
<keyword id="KW-0378">Hydrolase</keyword>
<keyword id="KW-0645">Protease</keyword>
<keyword id="KW-0720">Serine protease</keyword>
<accession>Q0HHP4</accession>
<gene>
    <name evidence="1" type="primary">pepE</name>
    <name type="ordered locus">Shewmr4_2352</name>
</gene>
<reference key="1">
    <citation type="submission" date="2006-08" db="EMBL/GenBank/DDBJ databases">
        <title>Complete sequence of Shewanella sp. MR-4.</title>
        <authorList>
            <consortium name="US DOE Joint Genome Institute"/>
            <person name="Copeland A."/>
            <person name="Lucas S."/>
            <person name="Lapidus A."/>
            <person name="Barry K."/>
            <person name="Detter J.C."/>
            <person name="Glavina del Rio T."/>
            <person name="Hammon N."/>
            <person name="Israni S."/>
            <person name="Dalin E."/>
            <person name="Tice H."/>
            <person name="Pitluck S."/>
            <person name="Kiss H."/>
            <person name="Brettin T."/>
            <person name="Bruce D."/>
            <person name="Han C."/>
            <person name="Tapia R."/>
            <person name="Gilna P."/>
            <person name="Schmutz J."/>
            <person name="Larimer F."/>
            <person name="Land M."/>
            <person name="Hauser L."/>
            <person name="Kyrpides N."/>
            <person name="Mikhailova N."/>
            <person name="Nealson K."/>
            <person name="Konstantinidis K."/>
            <person name="Klappenbach J."/>
            <person name="Tiedje J."/>
            <person name="Richardson P."/>
        </authorList>
    </citation>
    <scope>NUCLEOTIDE SEQUENCE [LARGE SCALE GENOMIC DNA]</scope>
    <source>
        <strain>MR-4</strain>
    </source>
</reference>
<organism>
    <name type="scientific">Shewanella sp. (strain MR-4)</name>
    <dbReference type="NCBI Taxonomy" id="60480"/>
    <lineage>
        <taxon>Bacteria</taxon>
        <taxon>Pseudomonadati</taxon>
        <taxon>Pseudomonadota</taxon>
        <taxon>Gammaproteobacteria</taxon>
        <taxon>Alteromonadales</taxon>
        <taxon>Shewanellaceae</taxon>
        <taxon>Shewanella</taxon>
    </lineage>
</organism>